<proteinExistence type="inferred from homology"/>
<name>API5_DICDI</name>
<accession>Q54CL0</accession>
<keyword id="KW-0053">Apoptosis</keyword>
<keyword id="KW-1185">Reference proteome</keyword>
<gene>
    <name type="primary">api5</name>
    <name type="ORF">DDB_G0292876</name>
</gene>
<organism>
    <name type="scientific">Dictyostelium discoideum</name>
    <name type="common">Social amoeba</name>
    <dbReference type="NCBI Taxonomy" id="44689"/>
    <lineage>
        <taxon>Eukaryota</taxon>
        <taxon>Amoebozoa</taxon>
        <taxon>Evosea</taxon>
        <taxon>Eumycetozoa</taxon>
        <taxon>Dictyostelia</taxon>
        <taxon>Dictyosteliales</taxon>
        <taxon>Dictyosteliaceae</taxon>
        <taxon>Dictyostelium</taxon>
    </lineage>
</organism>
<protein>
    <recommendedName>
        <fullName>Apoptosis inhibitor 5 homolog</fullName>
        <shortName>API-5</shortName>
    </recommendedName>
</protein>
<comment type="function">
    <text>May be an antiapoptotic factor.</text>
</comment>
<comment type="similarity">
    <text evidence="2">Belongs to the API5 family.</text>
</comment>
<reference key="1">
    <citation type="journal article" date="2005" name="Nature">
        <title>The genome of the social amoeba Dictyostelium discoideum.</title>
        <authorList>
            <person name="Eichinger L."/>
            <person name="Pachebat J.A."/>
            <person name="Gloeckner G."/>
            <person name="Rajandream M.A."/>
            <person name="Sucgang R."/>
            <person name="Berriman M."/>
            <person name="Song J."/>
            <person name="Olsen R."/>
            <person name="Szafranski K."/>
            <person name="Xu Q."/>
            <person name="Tunggal B."/>
            <person name="Kummerfeld S."/>
            <person name="Madera M."/>
            <person name="Konfortov B.A."/>
            <person name="Rivero F."/>
            <person name="Bankier A.T."/>
            <person name="Lehmann R."/>
            <person name="Hamlin N."/>
            <person name="Davies R."/>
            <person name="Gaudet P."/>
            <person name="Fey P."/>
            <person name="Pilcher K."/>
            <person name="Chen G."/>
            <person name="Saunders D."/>
            <person name="Sodergren E.J."/>
            <person name="Davis P."/>
            <person name="Kerhornou A."/>
            <person name="Nie X."/>
            <person name="Hall N."/>
            <person name="Anjard C."/>
            <person name="Hemphill L."/>
            <person name="Bason N."/>
            <person name="Farbrother P."/>
            <person name="Desany B."/>
            <person name="Just E."/>
            <person name="Morio T."/>
            <person name="Rost R."/>
            <person name="Churcher C.M."/>
            <person name="Cooper J."/>
            <person name="Haydock S."/>
            <person name="van Driessche N."/>
            <person name="Cronin A."/>
            <person name="Goodhead I."/>
            <person name="Muzny D.M."/>
            <person name="Mourier T."/>
            <person name="Pain A."/>
            <person name="Lu M."/>
            <person name="Harper D."/>
            <person name="Lindsay R."/>
            <person name="Hauser H."/>
            <person name="James K.D."/>
            <person name="Quiles M."/>
            <person name="Madan Babu M."/>
            <person name="Saito T."/>
            <person name="Buchrieser C."/>
            <person name="Wardroper A."/>
            <person name="Felder M."/>
            <person name="Thangavelu M."/>
            <person name="Johnson D."/>
            <person name="Knights A."/>
            <person name="Loulseged H."/>
            <person name="Mungall K.L."/>
            <person name="Oliver K."/>
            <person name="Price C."/>
            <person name="Quail M.A."/>
            <person name="Urushihara H."/>
            <person name="Hernandez J."/>
            <person name="Rabbinowitsch E."/>
            <person name="Steffen D."/>
            <person name="Sanders M."/>
            <person name="Ma J."/>
            <person name="Kohara Y."/>
            <person name="Sharp S."/>
            <person name="Simmonds M.N."/>
            <person name="Spiegler S."/>
            <person name="Tivey A."/>
            <person name="Sugano S."/>
            <person name="White B."/>
            <person name="Walker D."/>
            <person name="Woodward J.R."/>
            <person name="Winckler T."/>
            <person name="Tanaka Y."/>
            <person name="Shaulsky G."/>
            <person name="Schleicher M."/>
            <person name="Weinstock G.M."/>
            <person name="Rosenthal A."/>
            <person name="Cox E.C."/>
            <person name="Chisholm R.L."/>
            <person name="Gibbs R.A."/>
            <person name="Loomis W.F."/>
            <person name="Platzer M."/>
            <person name="Kay R.R."/>
            <person name="Williams J.G."/>
            <person name="Dear P.H."/>
            <person name="Noegel A.A."/>
            <person name="Barrell B.G."/>
            <person name="Kuspa A."/>
        </authorList>
    </citation>
    <scope>NUCLEOTIDE SEQUENCE [LARGE SCALE GENOMIC DNA]</scope>
    <source>
        <strain>AX4</strain>
    </source>
</reference>
<sequence length="606" mass="68973">METTTTTTTAAATKGTNDAMETSSSTTATPTTATVVPQVVRNDEYINTFYDIANKLDTNPSFPDDDKLFSKIIELSSKTKQTKKLSPQFISKYFKRFPTLQEKAIDCLIDLFDSSDEDVIMRVNALKAIPTICRDNPDHIAKLVDILSQLLNTDSKVEAEHTKNSLIELYKLNSVTTLNSFLTFLESEESSMEDQPASSTLLSFLKESIIPLVRTEYSKSSIETQTFFRVRILKLIAKCTSTTELDLLFQLLECFTQYKVQETITDLETNVLPVIESQSLDTIRKKLINFTKILLFKSKKPHTEINSNKLFDLYLNKIFPKVNELDETNKTELVSVFSQVTPHMTQEISMQFLEPVYNLFKATVPSKTTTPVADVDLQFTIVEALLFALSSIGSKSTSSLCKLCGFKLVTGQPSDMNADPVKYEDFLGRHRFLDEKCRETLGKAKKAIPNLGNPKDKAQLKLAQKTLLSTQNILTIMQNLLKSPPVTNINNLVISSTIFKGKQNLIHNVSPVFKPQQHQHQHQQQQVQQKQYQKYQAQQQQQQNIPIQRNQQQQQQQKSNRYQPYVTPGRRHQDLDKPKQDGVEVHYYSEKHNKPSSFKGRGPKSY</sequence>
<dbReference type="EMBL" id="AAFI02000197">
    <property type="protein sequence ID" value="EAL60987.1"/>
    <property type="molecule type" value="Genomic_DNA"/>
</dbReference>
<dbReference type="RefSeq" id="XP_629406.1">
    <property type="nucleotide sequence ID" value="XM_629404.1"/>
</dbReference>
<dbReference type="SMR" id="Q54CL0"/>
<dbReference type="FunCoup" id="Q54CL0">
    <property type="interactions" value="998"/>
</dbReference>
<dbReference type="STRING" id="44689.Q54CL0"/>
<dbReference type="GlyGen" id="Q54CL0">
    <property type="glycosylation" value="1 site"/>
</dbReference>
<dbReference type="PaxDb" id="44689-DDB0191665"/>
<dbReference type="EnsemblProtists" id="EAL60987">
    <property type="protein sequence ID" value="EAL60987"/>
    <property type="gene ID" value="DDB_G0292876"/>
</dbReference>
<dbReference type="GeneID" id="8628925"/>
<dbReference type="KEGG" id="ddi:DDB_G0292876"/>
<dbReference type="dictyBase" id="DDB_G0292876"/>
<dbReference type="VEuPathDB" id="AmoebaDB:DDB_G0292876"/>
<dbReference type="eggNOG" id="KOG2213">
    <property type="taxonomic scope" value="Eukaryota"/>
</dbReference>
<dbReference type="HOGENOM" id="CLU_450893_0_0_1"/>
<dbReference type="InParanoid" id="Q54CL0"/>
<dbReference type="OMA" id="RCIKFLA"/>
<dbReference type="PhylomeDB" id="Q54CL0"/>
<dbReference type="PRO" id="PR:Q54CL0"/>
<dbReference type="Proteomes" id="UP000002195">
    <property type="component" value="Chromosome 6"/>
</dbReference>
<dbReference type="GO" id="GO:0005634">
    <property type="term" value="C:nucleus"/>
    <property type="evidence" value="ECO:0000318"/>
    <property type="project" value="GO_Central"/>
</dbReference>
<dbReference type="GO" id="GO:0003723">
    <property type="term" value="F:RNA binding"/>
    <property type="evidence" value="ECO:0000318"/>
    <property type="project" value="GO_Central"/>
</dbReference>
<dbReference type="GO" id="GO:0043066">
    <property type="term" value="P:negative regulation of apoptotic process"/>
    <property type="evidence" value="ECO:0000318"/>
    <property type="project" value="GO_Central"/>
</dbReference>
<dbReference type="Gene3D" id="1.25.10.10">
    <property type="entry name" value="Leucine-rich Repeat Variant"/>
    <property type="match status" value="1"/>
</dbReference>
<dbReference type="InterPro" id="IPR008383">
    <property type="entry name" value="API5"/>
</dbReference>
<dbReference type="InterPro" id="IPR011989">
    <property type="entry name" value="ARM-like"/>
</dbReference>
<dbReference type="InterPro" id="IPR016024">
    <property type="entry name" value="ARM-type_fold"/>
</dbReference>
<dbReference type="PANTHER" id="PTHR12758:SF19">
    <property type="entry name" value="APOPTOSIS INHIBITOR 5"/>
    <property type="match status" value="1"/>
</dbReference>
<dbReference type="PANTHER" id="PTHR12758">
    <property type="entry name" value="APOPTOSIS INHIBITOR 5-RELATED"/>
    <property type="match status" value="1"/>
</dbReference>
<dbReference type="Pfam" id="PF05918">
    <property type="entry name" value="API5"/>
    <property type="match status" value="1"/>
</dbReference>
<dbReference type="SUPFAM" id="SSF48371">
    <property type="entry name" value="ARM repeat"/>
    <property type="match status" value="1"/>
</dbReference>
<feature type="chain" id="PRO_0000378098" description="Apoptosis inhibitor 5 homolog">
    <location>
        <begin position="1"/>
        <end position="606"/>
    </location>
</feature>
<feature type="region of interest" description="Disordered" evidence="1">
    <location>
        <begin position="1"/>
        <end position="30"/>
    </location>
</feature>
<feature type="region of interest" description="Disordered" evidence="1">
    <location>
        <begin position="537"/>
        <end position="606"/>
    </location>
</feature>
<feature type="compositionally biased region" description="Low complexity" evidence="1">
    <location>
        <begin position="1"/>
        <end position="13"/>
    </location>
</feature>
<feature type="compositionally biased region" description="Low complexity" evidence="1">
    <location>
        <begin position="537"/>
        <end position="564"/>
    </location>
</feature>
<feature type="compositionally biased region" description="Basic and acidic residues" evidence="1">
    <location>
        <begin position="571"/>
        <end position="593"/>
    </location>
</feature>
<evidence type="ECO:0000256" key="1">
    <source>
        <dbReference type="SAM" id="MobiDB-lite"/>
    </source>
</evidence>
<evidence type="ECO:0000305" key="2"/>